<gene>
    <name evidence="1" type="primary">yhbP</name>
    <name type="ordered locus">SCH_3211</name>
</gene>
<organism>
    <name type="scientific">Salmonella choleraesuis (strain SC-B67)</name>
    <dbReference type="NCBI Taxonomy" id="321314"/>
    <lineage>
        <taxon>Bacteria</taxon>
        <taxon>Pseudomonadati</taxon>
        <taxon>Pseudomonadota</taxon>
        <taxon>Gammaproteobacteria</taxon>
        <taxon>Enterobacterales</taxon>
        <taxon>Enterobacteriaceae</taxon>
        <taxon>Salmonella</taxon>
    </lineage>
</organism>
<sequence>MDTLTAIGRWLAKQHVVTWCVHHEGELWCANAFYLFDAQNVALYLLTDDKTRHAQMSGACAPVAGTVNGQPKTVARIRGVQFKGEIRRLEGQESDAVRKAYLRRFPVARVLPAPVWEIRLDEIKFTDNTLGFGKKLHWLRDSRAQQA</sequence>
<reference key="1">
    <citation type="journal article" date="2005" name="Nucleic Acids Res.">
        <title>The genome sequence of Salmonella enterica serovar Choleraesuis, a highly invasive and resistant zoonotic pathogen.</title>
        <authorList>
            <person name="Chiu C.-H."/>
            <person name="Tang P."/>
            <person name="Chu C."/>
            <person name="Hu S."/>
            <person name="Bao Q."/>
            <person name="Yu J."/>
            <person name="Chou Y.-Y."/>
            <person name="Wang H.-S."/>
            <person name="Lee Y.-S."/>
        </authorList>
    </citation>
    <scope>NUCLEOTIDE SEQUENCE [LARGE SCALE GENOMIC DNA]</scope>
    <source>
        <strain>SC-B67</strain>
    </source>
</reference>
<dbReference type="EMBL" id="AE017220">
    <property type="protein sequence ID" value="AAX67117.1"/>
    <property type="molecule type" value="Genomic_DNA"/>
</dbReference>
<dbReference type="RefSeq" id="WP_000380405.1">
    <property type="nucleotide sequence ID" value="NC_006905.1"/>
</dbReference>
<dbReference type="SMR" id="Q57JJ5"/>
<dbReference type="KEGG" id="sec:SCH_3211"/>
<dbReference type="HOGENOM" id="CLU_105087_3_0_6"/>
<dbReference type="Proteomes" id="UP000000538">
    <property type="component" value="Chromosome"/>
</dbReference>
<dbReference type="Gene3D" id="2.30.110.10">
    <property type="entry name" value="Electron Transport, Fmn-binding Protein, Chain A"/>
    <property type="match status" value="1"/>
</dbReference>
<dbReference type="HAMAP" id="MF_00764">
    <property type="entry name" value="UPF0306"/>
    <property type="match status" value="1"/>
</dbReference>
<dbReference type="InterPro" id="IPR012349">
    <property type="entry name" value="Split_barrel_FMN-bd"/>
</dbReference>
<dbReference type="InterPro" id="IPR011194">
    <property type="entry name" value="UPF0306"/>
</dbReference>
<dbReference type="NCBIfam" id="NF002900">
    <property type="entry name" value="PRK03467.1"/>
    <property type="match status" value="1"/>
</dbReference>
<dbReference type="PIRSF" id="PIRSF009554">
    <property type="entry name" value="UCP009554"/>
    <property type="match status" value="1"/>
</dbReference>
<dbReference type="SUPFAM" id="SSF50475">
    <property type="entry name" value="FMN-binding split barrel"/>
    <property type="match status" value="1"/>
</dbReference>
<evidence type="ECO:0000255" key="1">
    <source>
        <dbReference type="HAMAP-Rule" id="MF_00764"/>
    </source>
</evidence>
<protein>
    <recommendedName>
        <fullName evidence="1">UPF0306 protein YhbP</fullName>
    </recommendedName>
</protein>
<proteinExistence type="inferred from homology"/>
<comment type="similarity">
    <text evidence="1">Belongs to the UPF0306 family.</text>
</comment>
<feature type="chain" id="PRO_1000046780" description="UPF0306 protein YhbP">
    <location>
        <begin position="1"/>
        <end position="147"/>
    </location>
</feature>
<accession>Q57JJ5</accession>
<name>YHBP_SALCH</name>